<sequence>MTARPSVSVYSASEDKVVGTCSLPAVFTAPIRHDVVQFVHTNMAKNSRQPYAVNRLSGMKHSTESWGTGRAVARIPRIHGGGTSMSGAGAFGNMCRGGRMFAPTKIFRRWHRKINLHQKRFAVVSALAASSLPALVMSRGHKIENVAEVPLVVEDGVRAYEKTKEAMTFLKTVGAIDDVNRVNDSRQIRAGRGKMRNRRYVARRGPMLVMPDNKGTRAFRNIFGLDLANVNSLNLLHLAPGGHVGRFIIWTKSAFEKLDKIFGTFTEPSTVKSGFMLPAPMLTSTDVTRIMQSEEVRRVLKPKKLQPKRPSRYRQPTNGIRNRRLRLRLNPFQKKEKAMAKGMQNKKNREARHAAKVVRLAKARKNVAKALKKK</sequence>
<name>RL4_TRYBB</name>
<feature type="chain" id="PRO_0000129361" description="Large ribosomal subunit protein uL4">
    <location>
        <begin position="1"/>
        <end position="374"/>
    </location>
</feature>
<feature type="region of interest" description="Disordered" evidence="1">
    <location>
        <begin position="336"/>
        <end position="355"/>
    </location>
</feature>
<accession>P49669</accession>
<proteinExistence type="inferred from homology"/>
<protein>
    <recommendedName>
        <fullName evidence="2">Large ribosomal subunit protein uL4</fullName>
    </recommendedName>
    <alternativeName>
        <fullName>60S ribosomal protein L4</fullName>
    </alternativeName>
    <alternativeName>
        <fullName>L1</fullName>
    </alternativeName>
</protein>
<comment type="similarity">
    <text evidence="2">Belongs to the universal ribosomal protein uL4 family.</text>
</comment>
<organism>
    <name type="scientific">Trypanosoma brucei brucei</name>
    <dbReference type="NCBI Taxonomy" id="5702"/>
    <lineage>
        <taxon>Eukaryota</taxon>
        <taxon>Discoba</taxon>
        <taxon>Euglenozoa</taxon>
        <taxon>Kinetoplastea</taxon>
        <taxon>Metakinetoplastina</taxon>
        <taxon>Trypanosomatida</taxon>
        <taxon>Trypanosomatidae</taxon>
        <taxon>Trypanosoma</taxon>
    </lineage>
</organism>
<gene>
    <name type="primary">RPL4</name>
    <name type="synonym">RPL1</name>
</gene>
<evidence type="ECO:0000256" key="1">
    <source>
        <dbReference type="SAM" id="MobiDB-lite"/>
    </source>
</evidence>
<evidence type="ECO:0000305" key="2"/>
<keyword id="KW-0687">Ribonucleoprotein</keyword>
<keyword id="KW-0689">Ribosomal protein</keyword>
<reference key="1">
    <citation type="submission" date="1995-10" db="EMBL/GenBank/DDBJ databases">
        <authorList>
            <person name="Wilson K."/>
            <person name="Uyetake L."/>
            <person name="Boothroyd J.C."/>
        </authorList>
    </citation>
    <scope>NUCLEOTIDE SEQUENCE [GENOMIC DNA]</scope>
    <source>
        <strain>427</strain>
    </source>
</reference>
<dbReference type="EMBL" id="Z54340">
    <property type="protein sequence ID" value="CAA91141.1"/>
    <property type="molecule type" value="Genomic_DNA"/>
</dbReference>
<dbReference type="SMR" id="P49669"/>
<dbReference type="GO" id="GO:1990904">
    <property type="term" value="C:ribonucleoprotein complex"/>
    <property type="evidence" value="ECO:0007669"/>
    <property type="project" value="UniProtKB-KW"/>
</dbReference>
<dbReference type="GO" id="GO:0005840">
    <property type="term" value="C:ribosome"/>
    <property type="evidence" value="ECO:0007669"/>
    <property type="project" value="UniProtKB-KW"/>
</dbReference>
<dbReference type="GO" id="GO:0003735">
    <property type="term" value="F:structural constituent of ribosome"/>
    <property type="evidence" value="ECO:0007669"/>
    <property type="project" value="InterPro"/>
</dbReference>
<dbReference type="GO" id="GO:0006412">
    <property type="term" value="P:translation"/>
    <property type="evidence" value="ECO:0007669"/>
    <property type="project" value="InterPro"/>
</dbReference>
<dbReference type="FunFam" id="3.40.1370.10:FF:000002">
    <property type="entry name" value="60S ribosomal protein L4"/>
    <property type="match status" value="1"/>
</dbReference>
<dbReference type="Gene3D" id="3.40.1370.10">
    <property type="match status" value="1"/>
</dbReference>
<dbReference type="InterPro" id="IPR025755">
    <property type="entry name" value="Ribos_uL4_C_dom"/>
</dbReference>
<dbReference type="InterPro" id="IPR002136">
    <property type="entry name" value="Ribosomal_uL4"/>
</dbReference>
<dbReference type="InterPro" id="IPR023574">
    <property type="entry name" value="Ribosomal_uL4_dom_sf"/>
</dbReference>
<dbReference type="InterPro" id="IPR013000">
    <property type="entry name" value="Ribosomal_uL4_euk/arc_CS"/>
</dbReference>
<dbReference type="InterPro" id="IPR045240">
    <property type="entry name" value="Ribosomal_uL4_euk/arch"/>
</dbReference>
<dbReference type="PANTHER" id="PTHR19431">
    <property type="entry name" value="60S RIBOSOMAL PROTEIN L4"/>
    <property type="match status" value="1"/>
</dbReference>
<dbReference type="Pfam" id="PF14374">
    <property type="entry name" value="Ribos_L4_asso_C"/>
    <property type="match status" value="1"/>
</dbReference>
<dbReference type="Pfam" id="PF00573">
    <property type="entry name" value="Ribosomal_L4"/>
    <property type="match status" value="1"/>
</dbReference>
<dbReference type="SUPFAM" id="SSF52166">
    <property type="entry name" value="Ribosomal protein L4"/>
    <property type="match status" value="1"/>
</dbReference>
<dbReference type="PROSITE" id="PS00939">
    <property type="entry name" value="RIBOSOMAL_L1E"/>
    <property type="match status" value="1"/>
</dbReference>